<name>GLDA_THEMA</name>
<evidence type="ECO:0000250" key="1">
    <source>
        <dbReference type="UniProtKB" id="P32816"/>
    </source>
</evidence>
<evidence type="ECO:0000269" key="2">
    <source>
    </source>
</evidence>
<evidence type="ECO:0000305" key="3"/>
<evidence type="ECO:0000305" key="4">
    <source>
    </source>
</evidence>
<evidence type="ECO:0007744" key="5">
    <source>
        <dbReference type="PDB" id="1KQ3"/>
    </source>
</evidence>
<evidence type="ECO:0007829" key="6">
    <source>
        <dbReference type="PDB" id="1KQ3"/>
    </source>
</evidence>
<proteinExistence type="evidence at protein level"/>
<feature type="chain" id="PRO_0000350665" description="Glycerol dehydrogenase">
    <location>
        <begin position="1"/>
        <end position="364"/>
    </location>
</feature>
<feature type="binding site" evidence="1">
    <location>
        <position position="37"/>
    </location>
    <ligand>
        <name>NAD(+)</name>
        <dbReference type="ChEBI" id="CHEBI:57540"/>
    </ligand>
</feature>
<feature type="binding site" evidence="1">
    <location>
        <position position="92"/>
    </location>
    <ligand>
        <name>NAD(+)</name>
        <dbReference type="ChEBI" id="CHEBI:57540"/>
    </ligand>
</feature>
<feature type="binding site" evidence="1">
    <location>
        <position position="93"/>
    </location>
    <ligand>
        <name>NAD(+)</name>
        <dbReference type="ChEBI" id="CHEBI:57540"/>
    </ligand>
</feature>
<feature type="binding site" evidence="1">
    <location>
        <position position="114"/>
    </location>
    <ligand>
        <name>NAD(+)</name>
        <dbReference type="ChEBI" id="CHEBI:57540"/>
    </ligand>
</feature>
<feature type="binding site" evidence="1">
    <location>
        <position position="117"/>
    </location>
    <ligand>
        <name>NAD(+)</name>
        <dbReference type="ChEBI" id="CHEBI:57540"/>
    </ligand>
</feature>
<feature type="binding site" evidence="4 5">
    <location>
        <position position="119"/>
    </location>
    <ligand>
        <name>glycerol</name>
        <dbReference type="ChEBI" id="CHEBI:17754"/>
    </ligand>
</feature>
<feature type="binding site" evidence="1">
    <location>
        <position position="123"/>
    </location>
    <ligand>
        <name>NAD(+)</name>
        <dbReference type="ChEBI" id="CHEBI:57540"/>
    </ligand>
</feature>
<feature type="binding site" evidence="1">
    <location>
        <position position="125"/>
    </location>
    <ligand>
        <name>NAD(+)</name>
        <dbReference type="ChEBI" id="CHEBI:57540"/>
    </ligand>
</feature>
<feature type="binding site" evidence="1">
    <location>
        <position position="129"/>
    </location>
    <ligand>
        <name>NAD(+)</name>
        <dbReference type="ChEBI" id="CHEBI:57540"/>
    </ligand>
</feature>
<feature type="binding site" evidence="4 5">
    <location>
        <position position="169"/>
    </location>
    <ligand>
        <name>glycerol</name>
        <dbReference type="ChEBI" id="CHEBI:17754"/>
    </ligand>
</feature>
<feature type="binding site" evidence="2 5">
    <location>
        <position position="169"/>
    </location>
    <ligand>
        <name>Zn(2+)</name>
        <dbReference type="ChEBI" id="CHEBI:29105"/>
        <note>catalytic</note>
    </ligand>
</feature>
<feature type="binding site" evidence="4 5">
    <location>
        <position position="252"/>
    </location>
    <ligand>
        <name>glycerol</name>
        <dbReference type="ChEBI" id="CHEBI:17754"/>
    </ligand>
</feature>
<feature type="binding site" evidence="2 5">
    <location>
        <position position="252"/>
    </location>
    <ligand>
        <name>Zn(2+)</name>
        <dbReference type="ChEBI" id="CHEBI:29105"/>
        <note>catalytic</note>
    </ligand>
</feature>
<feature type="binding site" evidence="4 5">
    <location>
        <position position="269"/>
    </location>
    <ligand>
        <name>glycerol</name>
        <dbReference type="ChEBI" id="CHEBI:17754"/>
    </ligand>
</feature>
<feature type="binding site" evidence="2 5">
    <location>
        <position position="269"/>
    </location>
    <ligand>
        <name>Zn(2+)</name>
        <dbReference type="ChEBI" id="CHEBI:29105"/>
        <note>catalytic</note>
    </ligand>
</feature>
<feature type="strand" evidence="6">
    <location>
        <begin position="9"/>
        <end position="14"/>
    </location>
</feature>
<feature type="helix" evidence="6">
    <location>
        <begin position="17"/>
        <end position="20"/>
    </location>
</feature>
<feature type="helix" evidence="6">
    <location>
        <begin position="21"/>
        <end position="26"/>
    </location>
</feature>
<feature type="strand" evidence="6">
    <location>
        <begin position="30"/>
        <end position="36"/>
    </location>
</feature>
<feature type="helix" evidence="6">
    <location>
        <begin position="38"/>
        <end position="43"/>
    </location>
</feature>
<feature type="helix" evidence="6">
    <location>
        <begin position="49"/>
        <end position="52"/>
    </location>
</feature>
<feature type="strand" evidence="6">
    <location>
        <begin position="54"/>
        <end position="62"/>
    </location>
</feature>
<feature type="helix" evidence="6">
    <location>
        <begin position="69"/>
        <end position="76"/>
    </location>
</feature>
<feature type="strand" evidence="6">
    <location>
        <begin position="85"/>
        <end position="91"/>
    </location>
</feature>
<feature type="helix" evidence="6">
    <location>
        <begin position="92"/>
        <end position="104"/>
    </location>
</feature>
<feature type="strand" evidence="6">
    <location>
        <begin position="109"/>
        <end position="115"/>
    </location>
</feature>
<feature type="strand" evidence="6">
    <location>
        <begin position="123"/>
        <end position="129"/>
    </location>
</feature>
<feature type="strand" evidence="6">
    <location>
        <begin position="135"/>
        <end position="140"/>
    </location>
</feature>
<feature type="strand" evidence="6">
    <location>
        <begin position="146"/>
        <end position="151"/>
    </location>
</feature>
<feature type="helix" evidence="6">
    <location>
        <begin position="152"/>
        <end position="157"/>
    </location>
</feature>
<feature type="helix" evidence="6">
    <location>
        <begin position="160"/>
        <end position="183"/>
    </location>
</feature>
<feature type="strand" evidence="6">
    <location>
        <begin position="190"/>
        <end position="192"/>
    </location>
</feature>
<feature type="helix" evidence="6">
    <location>
        <begin position="195"/>
        <end position="220"/>
    </location>
</feature>
<feature type="helix" evidence="6">
    <location>
        <begin position="226"/>
        <end position="246"/>
    </location>
</feature>
<feature type="helix" evidence="6">
    <location>
        <begin position="250"/>
        <end position="258"/>
    </location>
</feature>
<feature type="helix" evidence="6">
    <location>
        <begin position="262"/>
        <end position="264"/>
    </location>
</feature>
<feature type="helix" evidence="6">
    <location>
        <begin position="269"/>
        <end position="283"/>
    </location>
</feature>
<feature type="helix" evidence="6">
    <location>
        <begin position="288"/>
        <end position="301"/>
    </location>
</feature>
<feature type="helix" evidence="6">
    <location>
        <begin position="307"/>
        <end position="310"/>
    </location>
</feature>
<feature type="helix" evidence="6">
    <location>
        <begin position="317"/>
        <end position="327"/>
    </location>
</feature>
<feature type="helix" evidence="6">
    <location>
        <begin position="333"/>
        <end position="336"/>
    </location>
</feature>
<feature type="strand" evidence="6">
    <location>
        <begin position="337"/>
        <end position="339"/>
    </location>
</feature>
<feature type="helix" evidence="6">
    <location>
        <begin position="343"/>
        <end position="360"/>
    </location>
</feature>
<reference key="1">
    <citation type="journal article" date="1999" name="Nature">
        <title>Evidence for lateral gene transfer between Archaea and Bacteria from genome sequence of Thermotoga maritima.</title>
        <authorList>
            <person name="Nelson K.E."/>
            <person name="Clayton R.A."/>
            <person name="Gill S.R."/>
            <person name="Gwinn M.L."/>
            <person name="Dodson R.J."/>
            <person name="Haft D.H."/>
            <person name="Hickey E.K."/>
            <person name="Peterson J.D."/>
            <person name="Nelson W.C."/>
            <person name="Ketchum K.A."/>
            <person name="McDonald L.A."/>
            <person name="Utterback T.R."/>
            <person name="Malek J.A."/>
            <person name="Linher K.D."/>
            <person name="Garrett M.M."/>
            <person name="Stewart A.M."/>
            <person name="Cotton M.D."/>
            <person name="Pratt M.S."/>
            <person name="Phillips C.A."/>
            <person name="Richardson D.L."/>
            <person name="Heidelberg J.F."/>
            <person name="Sutton G.G."/>
            <person name="Fleischmann R.D."/>
            <person name="Eisen J.A."/>
            <person name="White O."/>
            <person name="Salzberg S.L."/>
            <person name="Smith H.O."/>
            <person name="Venter J.C."/>
            <person name="Fraser C.M."/>
        </authorList>
    </citation>
    <scope>NUCLEOTIDE SEQUENCE [LARGE SCALE GENOMIC DNA]</scope>
    <source>
        <strain>ATCC 43589 / DSM 3109 / JCM 10099 / NBRC 100826 / MSB8</strain>
    </source>
</reference>
<reference key="2">
    <citation type="journal article" date="2002" name="Proc. Natl. Acad. Sci. U.S.A.">
        <title>Structural genomics of the Thermotoga maritima proteome implemented in a high-throughput structure determination pipeline.</title>
        <authorList>
            <person name="Lesley S.A."/>
            <person name="Kuhn P."/>
            <person name="Godzik A."/>
            <person name="Deacon A.M."/>
            <person name="Mathews I."/>
            <person name="Kreusch A."/>
            <person name="Spraggon G."/>
            <person name="Klock H.E."/>
            <person name="McMullan D."/>
            <person name="Shin T."/>
            <person name="Vincent J."/>
            <person name="Robb A."/>
            <person name="Brinen L.S."/>
            <person name="Miller M.D."/>
            <person name="McPhillips T.M."/>
            <person name="Miller M.A."/>
            <person name="Scheibe D."/>
            <person name="Canaves J.M."/>
            <person name="Guda C."/>
            <person name="Jaroszewski L."/>
            <person name="Selby T.L."/>
            <person name="Elsliger M.-A."/>
            <person name="Wooley J."/>
            <person name="Taylor S.S."/>
            <person name="Hodgson K.O."/>
            <person name="Wilson I.A."/>
            <person name="Schultz P.G."/>
            <person name="Stevens R.C."/>
        </authorList>
    </citation>
    <scope>X-RAY CRYSTALLOGRAPHY (1.5 ANGSTROMS) IN COMPLEX WITH ZINC AND SUBSTRATE ANALOG</scope>
    <source>
        <strain>ATCC 43589 / DSM 3109 / JCM 10099 / NBRC 100826 / MSB8</strain>
    </source>
</reference>
<comment type="function">
    <text evidence="1">Catalyzes the NAD-dependent oxidation of glycerol to dihydroxyacetone (glycerone).</text>
</comment>
<comment type="catalytic activity">
    <reaction evidence="1">
        <text>glycerol + NAD(+) = dihydroxyacetone + NADH + H(+)</text>
        <dbReference type="Rhea" id="RHEA:13769"/>
        <dbReference type="ChEBI" id="CHEBI:15378"/>
        <dbReference type="ChEBI" id="CHEBI:16016"/>
        <dbReference type="ChEBI" id="CHEBI:17754"/>
        <dbReference type="ChEBI" id="CHEBI:57540"/>
        <dbReference type="ChEBI" id="CHEBI:57945"/>
        <dbReference type="EC" id="1.1.1.6"/>
    </reaction>
</comment>
<comment type="cofactor">
    <cofactor evidence="1">
        <name>Zn(2+)</name>
        <dbReference type="ChEBI" id="CHEBI:29105"/>
    </cofactor>
    <text evidence="2">Binds 1 zinc ion per subunit.</text>
</comment>
<comment type="pathway">
    <text>Polyol metabolism; glycerol fermentation; glycerone phosphate from glycerol (oxidative route): step 1/2.</text>
</comment>
<comment type="similarity">
    <text evidence="3">Belongs to the iron-containing alcohol dehydrogenase family.</text>
</comment>
<protein>
    <recommendedName>
        <fullName>Glycerol dehydrogenase</fullName>
        <shortName>GDH</shortName>
        <shortName>GLDH</shortName>
        <ecNumber evidence="1">1.1.1.6</ecNumber>
    </recommendedName>
</protein>
<organism>
    <name type="scientific">Thermotoga maritima (strain ATCC 43589 / DSM 3109 / JCM 10099 / NBRC 100826 / MSB8)</name>
    <dbReference type="NCBI Taxonomy" id="243274"/>
    <lineage>
        <taxon>Bacteria</taxon>
        <taxon>Thermotogati</taxon>
        <taxon>Thermotogota</taxon>
        <taxon>Thermotogae</taxon>
        <taxon>Thermotogales</taxon>
        <taxon>Thermotogaceae</taxon>
        <taxon>Thermotoga</taxon>
    </lineage>
</organism>
<accession>Q9WYQ4</accession>
<keyword id="KW-0002">3D-structure</keyword>
<keyword id="KW-0319">Glycerol metabolism</keyword>
<keyword id="KW-0479">Metal-binding</keyword>
<keyword id="KW-0520">NAD</keyword>
<keyword id="KW-0560">Oxidoreductase</keyword>
<keyword id="KW-1185">Reference proteome</keyword>
<keyword id="KW-0862">Zinc</keyword>
<sequence>MITTTIFPGRYVQGAGAINILEEELSRFGERAFVVIDDFVDKNVLGENFFSSFTKVRVNKQIFGGECSDEEIERLSGLVEEETDVVVGIGGGKTLDTAKAVAYKLKKPVVIVPTIASTDAPCSALSVIYTPNGEFKRYLFLPRNPDVVLVDTEIVAKAPARFLVAGMGDALATWFEAESCKQKYAPNMTGRLGSMTAYALARLCYETLLEYGVLAKRSVEEKSVTPALEKIVEANTLLSGLGFESGGLAAAHAIHNGLTVLENTHKYLHGEKVAIGVLASLFLTDKPRKMIEEVYSFCEEVGLPTTLAEIGLDGVSDEDLMKVAEKACDKNETIHNEPQPVTSKDVFFALKAADRYGRMRKNLT</sequence>
<dbReference type="EC" id="1.1.1.6" evidence="1"/>
<dbReference type="EMBL" id="AE000512">
    <property type="protein sequence ID" value="AAD35508.1"/>
    <property type="molecule type" value="Genomic_DNA"/>
</dbReference>
<dbReference type="PIR" id="G72378">
    <property type="entry name" value="G72378"/>
</dbReference>
<dbReference type="RefSeq" id="NP_228233.1">
    <property type="nucleotide sequence ID" value="NC_000853.1"/>
</dbReference>
<dbReference type="RefSeq" id="WP_004083283.1">
    <property type="nucleotide sequence ID" value="NZ_CP011107.1"/>
</dbReference>
<dbReference type="PDB" id="1KQ3">
    <property type="method" value="X-ray"/>
    <property type="resolution" value="1.50 A"/>
    <property type="chains" value="A=1-364"/>
</dbReference>
<dbReference type="PDBsum" id="1KQ3"/>
<dbReference type="SMR" id="Q9WYQ4"/>
<dbReference type="STRING" id="243274.TM_0423"/>
<dbReference type="PaxDb" id="243274-THEMA_02610"/>
<dbReference type="EnsemblBacteria" id="AAD35508">
    <property type="protein sequence ID" value="AAD35508"/>
    <property type="gene ID" value="TM_0423"/>
</dbReference>
<dbReference type="KEGG" id="tma:TM0423"/>
<dbReference type="KEGG" id="tmi:THEMA_02610"/>
<dbReference type="KEGG" id="tmm:Tmari_0420"/>
<dbReference type="KEGG" id="tmw:THMA_0429"/>
<dbReference type="eggNOG" id="COG0371">
    <property type="taxonomic scope" value="Bacteria"/>
</dbReference>
<dbReference type="InParanoid" id="Q9WYQ4"/>
<dbReference type="OrthoDB" id="5198708at2"/>
<dbReference type="BRENDA" id="1.1.1.6">
    <property type="organism ID" value="6331"/>
</dbReference>
<dbReference type="UniPathway" id="UPA00617">
    <property type="reaction ID" value="UER00668"/>
</dbReference>
<dbReference type="EvolutionaryTrace" id="Q9WYQ4"/>
<dbReference type="Proteomes" id="UP000008183">
    <property type="component" value="Chromosome"/>
</dbReference>
<dbReference type="GO" id="GO:0005829">
    <property type="term" value="C:cytosol"/>
    <property type="evidence" value="ECO:0000318"/>
    <property type="project" value="GO_Central"/>
</dbReference>
<dbReference type="GO" id="GO:0008888">
    <property type="term" value="F:glycerol dehydrogenase (NAD+) activity"/>
    <property type="evidence" value="ECO:0007669"/>
    <property type="project" value="UniProtKB-EC"/>
</dbReference>
<dbReference type="GO" id="GO:0046872">
    <property type="term" value="F:metal ion binding"/>
    <property type="evidence" value="ECO:0007669"/>
    <property type="project" value="UniProtKB-KW"/>
</dbReference>
<dbReference type="GO" id="GO:0019588">
    <property type="term" value="P:anaerobic glycerol catabolic process"/>
    <property type="evidence" value="ECO:0007669"/>
    <property type="project" value="UniProtKB-UniPathway"/>
</dbReference>
<dbReference type="CDD" id="cd08170">
    <property type="entry name" value="GlyDH"/>
    <property type="match status" value="1"/>
</dbReference>
<dbReference type="Gene3D" id="3.40.50.1970">
    <property type="match status" value="1"/>
</dbReference>
<dbReference type="Gene3D" id="1.20.1090.10">
    <property type="entry name" value="Dehydroquinate synthase-like - alpha domain"/>
    <property type="match status" value="1"/>
</dbReference>
<dbReference type="InterPro" id="IPR001670">
    <property type="entry name" value="ADH_Fe/GldA"/>
</dbReference>
<dbReference type="InterPro" id="IPR018211">
    <property type="entry name" value="ADH_Fe_CS"/>
</dbReference>
<dbReference type="InterPro" id="IPR016205">
    <property type="entry name" value="Glycerol_DH"/>
</dbReference>
<dbReference type="NCBIfam" id="NF006941">
    <property type="entry name" value="PRK09423.1"/>
    <property type="match status" value="1"/>
</dbReference>
<dbReference type="PANTHER" id="PTHR43616">
    <property type="entry name" value="GLYCEROL DEHYDROGENASE"/>
    <property type="match status" value="1"/>
</dbReference>
<dbReference type="PANTHER" id="PTHR43616:SF5">
    <property type="entry name" value="GLYCEROL DEHYDROGENASE 1"/>
    <property type="match status" value="1"/>
</dbReference>
<dbReference type="Pfam" id="PF00465">
    <property type="entry name" value="Fe-ADH"/>
    <property type="match status" value="1"/>
</dbReference>
<dbReference type="PIRSF" id="PIRSF000112">
    <property type="entry name" value="Glycerol_dehydrogenase"/>
    <property type="match status" value="1"/>
</dbReference>
<dbReference type="SUPFAM" id="SSF56796">
    <property type="entry name" value="Dehydroquinate synthase-like"/>
    <property type="match status" value="1"/>
</dbReference>
<dbReference type="PROSITE" id="PS00913">
    <property type="entry name" value="ADH_IRON_1"/>
    <property type="match status" value="1"/>
</dbReference>
<dbReference type="PROSITE" id="PS00060">
    <property type="entry name" value="ADH_IRON_2"/>
    <property type="match status" value="1"/>
</dbReference>
<gene>
    <name type="primary">gldA</name>
    <name type="ordered locus">TM_0423</name>
</gene>